<protein>
    <recommendedName>
        <fullName evidence="1">UPF0309 protein BAbS19_II03080</fullName>
    </recommendedName>
</protein>
<proteinExistence type="inferred from homology"/>
<sequence length="242" mass="25608">MTEITDRYFNDVIARLSGLRDRLAAQMEKAADLIAAAARADRRVYVFGTGHSHMMAEELHYRAGGLAITVPILCGSIMLQDGAVASSHFERIEGAVRPILDRYGIRDGDVLVVVSNSGVNAAPIEAARYAREKGAAIIALTSVAYSNTIARGRTQLLSLADVVLDNDAPSGDAVLEIAGSALKVGPVSTALGVTILNAVFADVAARLVGEGDAPIYLSANMPGSGDINRSLVERYRDHNPHL</sequence>
<feature type="chain" id="PRO_1000139747" description="UPF0309 protein BAbS19_II03080">
    <location>
        <begin position="1"/>
        <end position="242"/>
    </location>
</feature>
<feature type="domain" description="SIS" evidence="1">
    <location>
        <begin position="30"/>
        <end position="214"/>
    </location>
</feature>
<comment type="similarity">
    <text evidence="1">Belongs to the UPF0309 family.</text>
</comment>
<reference key="1">
    <citation type="journal article" date="2008" name="PLoS ONE">
        <title>Genome sequence of Brucella abortus vaccine strain S19 compared to virulent strains yields candidate virulence genes.</title>
        <authorList>
            <person name="Crasta O.R."/>
            <person name="Folkerts O."/>
            <person name="Fei Z."/>
            <person name="Mane S.P."/>
            <person name="Evans C."/>
            <person name="Martino-Catt S."/>
            <person name="Bricker B."/>
            <person name="Yu G."/>
            <person name="Du L."/>
            <person name="Sobral B.W."/>
        </authorList>
    </citation>
    <scope>NUCLEOTIDE SEQUENCE [LARGE SCALE GENOMIC DNA]</scope>
    <source>
        <strain>S19</strain>
    </source>
</reference>
<gene>
    <name type="ordered locus">BAbS19_II03080</name>
</gene>
<name>Y3080_BRUA1</name>
<evidence type="ECO:0000255" key="1">
    <source>
        <dbReference type="HAMAP-Rule" id="MF_01240"/>
    </source>
</evidence>
<dbReference type="EMBL" id="CP000888">
    <property type="protein sequence ID" value="ACD73819.1"/>
    <property type="molecule type" value="Genomic_DNA"/>
</dbReference>
<dbReference type="RefSeq" id="WP_002965737.1">
    <property type="nucleotide sequence ID" value="NC_010740.1"/>
</dbReference>
<dbReference type="SMR" id="B2SDB5"/>
<dbReference type="KEGG" id="bmc:BAbS19_II03080"/>
<dbReference type="HOGENOM" id="CLU_089975_0_0_5"/>
<dbReference type="Proteomes" id="UP000002565">
    <property type="component" value="Chromosome 2"/>
</dbReference>
<dbReference type="GO" id="GO:0097367">
    <property type="term" value="F:carbohydrate derivative binding"/>
    <property type="evidence" value="ECO:0007669"/>
    <property type="project" value="InterPro"/>
</dbReference>
<dbReference type="GO" id="GO:1901135">
    <property type="term" value="P:carbohydrate derivative metabolic process"/>
    <property type="evidence" value="ECO:0007669"/>
    <property type="project" value="InterPro"/>
</dbReference>
<dbReference type="CDD" id="cd05013">
    <property type="entry name" value="SIS_RpiR"/>
    <property type="match status" value="1"/>
</dbReference>
<dbReference type="Gene3D" id="3.40.50.10490">
    <property type="entry name" value="Glucose-6-phosphate isomerase like protein, domain 1"/>
    <property type="match status" value="1"/>
</dbReference>
<dbReference type="HAMAP" id="MF_01240">
    <property type="entry name" value="UPF0309"/>
    <property type="match status" value="1"/>
</dbReference>
<dbReference type="InterPro" id="IPR035472">
    <property type="entry name" value="RpiR-like_SIS"/>
</dbReference>
<dbReference type="InterPro" id="IPR001347">
    <property type="entry name" value="SIS_dom"/>
</dbReference>
<dbReference type="InterPro" id="IPR046348">
    <property type="entry name" value="SIS_dom_sf"/>
</dbReference>
<dbReference type="InterPro" id="IPR050099">
    <property type="entry name" value="SIS_GmhA/DiaA_subfam"/>
</dbReference>
<dbReference type="InterPro" id="IPR022951">
    <property type="entry name" value="UPF0309"/>
</dbReference>
<dbReference type="NCBIfam" id="NF002805">
    <property type="entry name" value="PRK02947.1"/>
    <property type="match status" value="1"/>
</dbReference>
<dbReference type="PANTHER" id="PTHR30390:SF7">
    <property type="entry name" value="PHOSPHOHEPTOSE ISOMERASE"/>
    <property type="match status" value="1"/>
</dbReference>
<dbReference type="PANTHER" id="PTHR30390">
    <property type="entry name" value="SEDOHEPTULOSE 7-PHOSPHATE ISOMERASE / DNAA INITIATOR-ASSOCIATING FACTOR FOR REPLICATION INITIATION"/>
    <property type="match status" value="1"/>
</dbReference>
<dbReference type="Pfam" id="PF13580">
    <property type="entry name" value="SIS_2"/>
    <property type="match status" value="1"/>
</dbReference>
<dbReference type="SUPFAM" id="SSF53697">
    <property type="entry name" value="SIS domain"/>
    <property type="match status" value="1"/>
</dbReference>
<dbReference type="PROSITE" id="PS51464">
    <property type="entry name" value="SIS"/>
    <property type="match status" value="1"/>
</dbReference>
<organism>
    <name type="scientific">Brucella abortus (strain S19)</name>
    <dbReference type="NCBI Taxonomy" id="430066"/>
    <lineage>
        <taxon>Bacteria</taxon>
        <taxon>Pseudomonadati</taxon>
        <taxon>Pseudomonadota</taxon>
        <taxon>Alphaproteobacteria</taxon>
        <taxon>Hyphomicrobiales</taxon>
        <taxon>Brucellaceae</taxon>
        <taxon>Brucella/Ochrobactrum group</taxon>
        <taxon>Brucella</taxon>
    </lineage>
</organism>
<accession>B2SDB5</accession>